<dbReference type="EC" id="2.4.99.28" evidence="1"/>
<dbReference type="EMBL" id="CP000958">
    <property type="protein sequence ID" value="ACA89760.1"/>
    <property type="molecule type" value="Genomic_DNA"/>
</dbReference>
<dbReference type="RefSeq" id="WP_012327877.1">
    <property type="nucleotide sequence ID" value="NC_010508.1"/>
</dbReference>
<dbReference type="SMR" id="B1JVD0"/>
<dbReference type="CAZy" id="GT51">
    <property type="family name" value="Glycosyltransferase Family 51"/>
</dbReference>
<dbReference type="GeneID" id="83047382"/>
<dbReference type="KEGG" id="bcm:Bcenmc03_0582"/>
<dbReference type="HOGENOM" id="CLU_006354_1_0_4"/>
<dbReference type="UniPathway" id="UPA00219"/>
<dbReference type="Proteomes" id="UP000002169">
    <property type="component" value="Chromosome 1"/>
</dbReference>
<dbReference type="GO" id="GO:0009274">
    <property type="term" value="C:peptidoglycan-based cell wall"/>
    <property type="evidence" value="ECO:0007669"/>
    <property type="project" value="InterPro"/>
</dbReference>
<dbReference type="GO" id="GO:0005886">
    <property type="term" value="C:plasma membrane"/>
    <property type="evidence" value="ECO:0007669"/>
    <property type="project" value="UniProtKB-SubCell"/>
</dbReference>
<dbReference type="GO" id="GO:0016763">
    <property type="term" value="F:pentosyltransferase activity"/>
    <property type="evidence" value="ECO:0007669"/>
    <property type="project" value="InterPro"/>
</dbReference>
<dbReference type="GO" id="GO:0008955">
    <property type="term" value="F:peptidoglycan glycosyltransferase activity"/>
    <property type="evidence" value="ECO:0007669"/>
    <property type="project" value="UniProtKB-UniRule"/>
</dbReference>
<dbReference type="GO" id="GO:0071555">
    <property type="term" value="P:cell wall organization"/>
    <property type="evidence" value="ECO:0007669"/>
    <property type="project" value="UniProtKB-KW"/>
</dbReference>
<dbReference type="GO" id="GO:0009252">
    <property type="term" value="P:peptidoglycan biosynthetic process"/>
    <property type="evidence" value="ECO:0007669"/>
    <property type="project" value="UniProtKB-UniRule"/>
</dbReference>
<dbReference type="GO" id="GO:0008360">
    <property type="term" value="P:regulation of cell shape"/>
    <property type="evidence" value="ECO:0007669"/>
    <property type="project" value="UniProtKB-KW"/>
</dbReference>
<dbReference type="Gene3D" id="1.10.3810.10">
    <property type="entry name" value="Biosynthetic peptidoglycan transglycosylase-like"/>
    <property type="match status" value="1"/>
</dbReference>
<dbReference type="HAMAP" id="MF_00766">
    <property type="entry name" value="PGT_MtgA"/>
    <property type="match status" value="1"/>
</dbReference>
<dbReference type="InterPro" id="IPR001264">
    <property type="entry name" value="Glyco_trans_51"/>
</dbReference>
<dbReference type="InterPro" id="IPR023346">
    <property type="entry name" value="Lysozyme-like_dom_sf"/>
</dbReference>
<dbReference type="InterPro" id="IPR036950">
    <property type="entry name" value="PBP_transglycosylase"/>
</dbReference>
<dbReference type="InterPro" id="IPR011812">
    <property type="entry name" value="Pep_trsgly"/>
</dbReference>
<dbReference type="NCBIfam" id="TIGR02070">
    <property type="entry name" value="mono_pep_trsgly"/>
    <property type="match status" value="1"/>
</dbReference>
<dbReference type="PANTHER" id="PTHR30400:SF0">
    <property type="entry name" value="BIOSYNTHETIC PEPTIDOGLYCAN TRANSGLYCOSYLASE"/>
    <property type="match status" value="1"/>
</dbReference>
<dbReference type="PANTHER" id="PTHR30400">
    <property type="entry name" value="MONOFUNCTIONAL BIOSYNTHETIC PEPTIDOGLYCAN TRANSGLYCOSYLASE"/>
    <property type="match status" value="1"/>
</dbReference>
<dbReference type="Pfam" id="PF00912">
    <property type="entry name" value="Transgly"/>
    <property type="match status" value="1"/>
</dbReference>
<dbReference type="SUPFAM" id="SSF53955">
    <property type="entry name" value="Lysozyme-like"/>
    <property type="match status" value="1"/>
</dbReference>
<sequence length="245" mass="27712">MVAVSGTQRTRTVSLARWAVYAGSVFAGAWLATQLFYLAQIALWSFVNPGSTAFMRTDAWRLSRDTPPAQIRHQWVPYDQISRNLKRALIASEDSTFATNNGYDVDAILQAWEKNKARGRIVAGGSTITQQLARNLFLSREKSYIRKGQELIITWMLETVLDKERIFEIYLNSVEWGRGVYGAEAAARYYYKIPASRLGAWQSARLAVMLPKPRWFDAHRGSAYQAQRAAVIARRMGAAELPQSE</sequence>
<accession>B1JVD0</accession>
<gene>
    <name evidence="1" type="primary">mtgA</name>
    <name type="ordered locus">Bcenmc03_0582</name>
</gene>
<feature type="chain" id="PRO_1000133586" description="Biosynthetic peptidoglycan transglycosylase">
    <location>
        <begin position="1"/>
        <end position="245"/>
    </location>
</feature>
<feature type="transmembrane region" description="Helical" evidence="1">
    <location>
        <begin position="20"/>
        <end position="42"/>
    </location>
</feature>
<comment type="function">
    <text evidence="1">Peptidoglycan polymerase that catalyzes glycan chain elongation from lipid-linked precursors.</text>
</comment>
<comment type="catalytic activity">
    <reaction evidence="1">
        <text>[GlcNAc-(1-&gt;4)-Mur2Ac(oyl-L-Ala-gamma-D-Glu-L-Lys-D-Ala-D-Ala)](n)-di-trans,octa-cis-undecaprenyl diphosphate + beta-D-GlcNAc-(1-&gt;4)-Mur2Ac(oyl-L-Ala-gamma-D-Glu-L-Lys-D-Ala-D-Ala)-di-trans,octa-cis-undecaprenyl diphosphate = [GlcNAc-(1-&gt;4)-Mur2Ac(oyl-L-Ala-gamma-D-Glu-L-Lys-D-Ala-D-Ala)](n+1)-di-trans,octa-cis-undecaprenyl diphosphate + di-trans,octa-cis-undecaprenyl diphosphate + H(+)</text>
        <dbReference type="Rhea" id="RHEA:23708"/>
        <dbReference type="Rhea" id="RHEA-COMP:9602"/>
        <dbReference type="Rhea" id="RHEA-COMP:9603"/>
        <dbReference type="ChEBI" id="CHEBI:15378"/>
        <dbReference type="ChEBI" id="CHEBI:58405"/>
        <dbReference type="ChEBI" id="CHEBI:60033"/>
        <dbReference type="ChEBI" id="CHEBI:78435"/>
        <dbReference type="EC" id="2.4.99.28"/>
    </reaction>
</comment>
<comment type="pathway">
    <text evidence="1">Cell wall biogenesis; peptidoglycan biosynthesis.</text>
</comment>
<comment type="subcellular location">
    <subcellularLocation>
        <location evidence="1">Cell inner membrane</location>
        <topology evidence="1">Single-pass membrane protein</topology>
    </subcellularLocation>
</comment>
<comment type="similarity">
    <text evidence="1">Belongs to the glycosyltransferase 51 family.</text>
</comment>
<organism>
    <name type="scientific">Burkholderia orbicola (strain MC0-3)</name>
    <dbReference type="NCBI Taxonomy" id="406425"/>
    <lineage>
        <taxon>Bacteria</taxon>
        <taxon>Pseudomonadati</taxon>
        <taxon>Pseudomonadota</taxon>
        <taxon>Betaproteobacteria</taxon>
        <taxon>Burkholderiales</taxon>
        <taxon>Burkholderiaceae</taxon>
        <taxon>Burkholderia</taxon>
        <taxon>Burkholderia cepacia complex</taxon>
        <taxon>Burkholderia orbicola</taxon>
    </lineage>
</organism>
<keyword id="KW-0997">Cell inner membrane</keyword>
<keyword id="KW-1003">Cell membrane</keyword>
<keyword id="KW-0133">Cell shape</keyword>
<keyword id="KW-0961">Cell wall biogenesis/degradation</keyword>
<keyword id="KW-0328">Glycosyltransferase</keyword>
<keyword id="KW-0472">Membrane</keyword>
<keyword id="KW-0573">Peptidoglycan synthesis</keyword>
<keyword id="KW-0808">Transferase</keyword>
<keyword id="KW-0812">Transmembrane</keyword>
<keyword id="KW-1133">Transmembrane helix</keyword>
<evidence type="ECO:0000255" key="1">
    <source>
        <dbReference type="HAMAP-Rule" id="MF_00766"/>
    </source>
</evidence>
<name>MTGA_BURO0</name>
<protein>
    <recommendedName>
        <fullName evidence="1">Biosynthetic peptidoglycan transglycosylase</fullName>
        <ecNumber evidence="1">2.4.99.28</ecNumber>
    </recommendedName>
    <alternativeName>
        <fullName evidence="1">Glycan polymerase</fullName>
    </alternativeName>
    <alternativeName>
        <fullName evidence="1">Peptidoglycan glycosyltransferase MtgA</fullName>
        <shortName evidence="1">PGT</shortName>
    </alternativeName>
</protein>
<proteinExistence type="inferred from homology"/>
<reference key="1">
    <citation type="submission" date="2008-02" db="EMBL/GenBank/DDBJ databases">
        <title>Complete sequence of chromosome 1 of Burkholderia cenocepacia MC0-3.</title>
        <authorList>
            <person name="Copeland A."/>
            <person name="Lucas S."/>
            <person name="Lapidus A."/>
            <person name="Barry K."/>
            <person name="Bruce D."/>
            <person name="Goodwin L."/>
            <person name="Glavina del Rio T."/>
            <person name="Dalin E."/>
            <person name="Tice H."/>
            <person name="Pitluck S."/>
            <person name="Chain P."/>
            <person name="Malfatti S."/>
            <person name="Shin M."/>
            <person name="Vergez L."/>
            <person name="Schmutz J."/>
            <person name="Larimer F."/>
            <person name="Land M."/>
            <person name="Hauser L."/>
            <person name="Kyrpides N."/>
            <person name="Mikhailova N."/>
            <person name="Tiedje J."/>
            <person name="Richardson P."/>
        </authorList>
    </citation>
    <scope>NUCLEOTIDE SEQUENCE [LARGE SCALE GENOMIC DNA]</scope>
    <source>
        <strain>MC0-3</strain>
    </source>
</reference>